<protein>
    <recommendedName>
        <fullName evidence="1">Digeranylgeranylglycerophospholipid reductase</fullName>
        <shortName evidence="1">DGGGPL reductase</shortName>
        <ecNumber evidence="1">1.3.-.-</ecNumber>
    </recommendedName>
    <alternativeName>
        <fullName evidence="1">2,3-bis-O-geranylgeranylglyceryl phosphate reductase</fullName>
    </alternativeName>
    <alternativeName>
        <fullName evidence="1">Geranylgeranyl reductase</fullName>
        <shortName evidence="1">GGR</shortName>
    </alternativeName>
</protein>
<gene>
    <name type="ordered locus">Mevan_1375</name>
</gene>
<dbReference type="EC" id="1.3.-.-" evidence="1"/>
<dbReference type="EMBL" id="CP000742">
    <property type="protein sequence ID" value="ABR55272.1"/>
    <property type="molecule type" value="Genomic_DNA"/>
</dbReference>
<dbReference type="RefSeq" id="WP_012066186.1">
    <property type="nucleotide sequence ID" value="NC_009634.1"/>
</dbReference>
<dbReference type="SMR" id="A6US00"/>
<dbReference type="STRING" id="406327.Mevan_1375"/>
<dbReference type="GeneID" id="5324717"/>
<dbReference type="KEGG" id="mvn:Mevan_1375"/>
<dbReference type="eggNOG" id="arCOG00570">
    <property type="taxonomic scope" value="Archaea"/>
</dbReference>
<dbReference type="HOGENOM" id="CLU_024648_0_0_2"/>
<dbReference type="OrthoDB" id="6062at2157"/>
<dbReference type="UniPathway" id="UPA00940"/>
<dbReference type="Proteomes" id="UP000001107">
    <property type="component" value="Chromosome"/>
</dbReference>
<dbReference type="GO" id="GO:0016020">
    <property type="term" value="C:membrane"/>
    <property type="evidence" value="ECO:0007669"/>
    <property type="project" value="GOC"/>
</dbReference>
<dbReference type="GO" id="GO:0050660">
    <property type="term" value="F:flavin adenine dinucleotide binding"/>
    <property type="evidence" value="ECO:0007669"/>
    <property type="project" value="UniProtKB-UniRule"/>
</dbReference>
<dbReference type="GO" id="GO:0045550">
    <property type="term" value="F:geranylgeranyl reductase activity"/>
    <property type="evidence" value="ECO:0007669"/>
    <property type="project" value="InterPro"/>
</dbReference>
<dbReference type="GO" id="GO:0016628">
    <property type="term" value="F:oxidoreductase activity, acting on the CH-CH group of donors, NAD or NADP as acceptor"/>
    <property type="evidence" value="ECO:0007669"/>
    <property type="project" value="InterPro"/>
</dbReference>
<dbReference type="GO" id="GO:0046474">
    <property type="term" value="P:glycerophospholipid biosynthetic process"/>
    <property type="evidence" value="ECO:0007669"/>
    <property type="project" value="UniProtKB-UniRule"/>
</dbReference>
<dbReference type="GO" id="GO:0046467">
    <property type="term" value="P:membrane lipid biosynthetic process"/>
    <property type="evidence" value="ECO:0007669"/>
    <property type="project" value="InterPro"/>
</dbReference>
<dbReference type="Gene3D" id="3.30.9.10">
    <property type="entry name" value="D-Amino Acid Oxidase, subunit A, domain 2"/>
    <property type="match status" value="1"/>
</dbReference>
<dbReference type="Gene3D" id="3.50.50.60">
    <property type="entry name" value="FAD/NAD(P)-binding domain"/>
    <property type="match status" value="1"/>
</dbReference>
<dbReference type="HAMAP" id="MF_01287">
    <property type="entry name" value="DGGGPL_reductase"/>
    <property type="match status" value="1"/>
</dbReference>
<dbReference type="InterPro" id="IPR023590">
    <property type="entry name" value="DGGGPL_reductase"/>
</dbReference>
<dbReference type="InterPro" id="IPR036188">
    <property type="entry name" value="FAD/NAD-bd_sf"/>
</dbReference>
<dbReference type="InterPro" id="IPR011777">
    <property type="entry name" value="Geranylgeranyl_Rdtase_fam"/>
</dbReference>
<dbReference type="InterPro" id="IPR050407">
    <property type="entry name" value="Geranylgeranyl_reductase"/>
</dbReference>
<dbReference type="InterPro" id="IPR054715">
    <property type="entry name" value="GGR_cat"/>
</dbReference>
<dbReference type="NCBIfam" id="TIGR02032">
    <property type="entry name" value="GG-red-SF"/>
    <property type="match status" value="1"/>
</dbReference>
<dbReference type="PANTHER" id="PTHR42685:SF18">
    <property type="entry name" value="DIGERANYLGERANYLGLYCEROPHOSPHOLIPID REDUCTASE"/>
    <property type="match status" value="1"/>
</dbReference>
<dbReference type="PANTHER" id="PTHR42685">
    <property type="entry name" value="GERANYLGERANYL DIPHOSPHATE REDUCTASE"/>
    <property type="match status" value="1"/>
</dbReference>
<dbReference type="Pfam" id="PF12831">
    <property type="entry name" value="FAD_oxidored"/>
    <property type="match status" value="1"/>
</dbReference>
<dbReference type="Pfam" id="PF22578">
    <property type="entry name" value="GGR_cat"/>
    <property type="match status" value="1"/>
</dbReference>
<dbReference type="PRINTS" id="PR00420">
    <property type="entry name" value="RNGMNOXGNASE"/>
</dbReference>
<dbReference type="SUPFAM" id="SSF51905">
    <property type="entry name" value="FAD/NAD(P)-binding domain"/>
    <property type="match status" value="1"/>
</dbReference>
<accession>A6US00</accession>
<name>GGR_METVS</name>
<evidence type="ECO:0000255" key="1">
    <source>
        <dbReference type="HAMAP-Rule" id="MF_01287"/>
    </source>
</evidence>
<reference key="1">
    <citation type="submission" date="2007-06" db="EMBL/GenBank/DDBJ databases">
        <title>Complete sequence of Methanococcus vannielii SB.</title>
        <authorList>
            <consortium name="US DOE Joint Genome Institute"/>
            <person name="Copeland A."/>
            <person name="Lucas S."/>
            <person name="Lapidus A."/>
            <person name="Barry K."/>
            <person name="Glavina del Rio T."/>
            <person name="Dalin E."/>
            <person name="Tice H."/>
            <person name="Pitluck S."/>
            <person name="Chain P."/>
            <person name="Malfatti S."/>
            <person name="Shin M."/>
            <person name="Vergez L."/>
            <person name="Schmutz J."/>
            <person name="Larimer F."/>
            <person name="Land M."/>
            <person name="Hauser L."/>
            <person name="Kyrpides N."/>
            <person name="Anderson I."/>
            <person name="Sieprawska-Lupa M."/>
            <person name="Whitman W.B."/>
            <person name="Richardson P."/>
        </authorList>
    </citation>
    <scope>NUCLEOTIDE SEQUENCE [LARGE SCALE GENOMIC DNA]</scope>
    <source>
        <strain>ATCC 35089 / DSM 1224 / JCM 13029 / OCM 148 / SB</strain>
    </source>
</reference>
<sequence>MRALEESYDVVVVGAGPAGSMSSYNASKNGAKTLLIEKAQEIGTPVRCAEAIPRIESFGINPSSEFIRSYIKGAYLVAPNGKKITVKGGKTDGYVVERKIFDKFLAIRSAKEGTKIAVKSRVTGLEKTEEGYNVFVNHLGKEYTVKTKLVIAADGVESTISEYAGLKSKKNHNEVCSCAEYEMTNVKLLDNNMMEFYFGEICPKGYIWLFPKGDTVNVGIGIIEGSKKAIEYLDDFLSNPLLEGRLKNAVPVEFKVGGDPVGGPIKKTFKDNLIVVGDAAGHVSPLTGGGISLAMDCGLIAGEVCAKSISSKNYSEEFLSQYETRWKEKHYKFLMNDLKYKTILQKLNDNELNAIADSIPENLEEVDVGKLAIKIVKKAPSLLKYFKELI</sequence>
<proteinExistence type="inferred from homology"/>
<comment type="function">
    <text evidence="1">Is involved in the reduction of 2,3-digeranylgeranylglycerophospholipids (unsaturated archaeols) into 2,3-diphytanylglycerophospholipids (saturated archaeols) in the biosynthesis of archaeal membrane lipids. Catalyzes the formation of archaetidic acid (2,3-di-O-phytanyl-sn-glyceryl phosphate) from 2,3-di-O-geranylgeranylglyceryl phosphate (DGGGP) via the hydrogenation of each double bond of the isoprenoid chains. Is also probably able to reduce double bonds of geranyl groups in CDP-2,3-bis-O-(geranylgeranyl)-sn-glycerol and archaetidylserine, thus acting at various stages in the biosynthesis of archaeal membrane lipids.</text>
</comment>
<comment type="catalytic activity">
    <reaction evidence="1">
        <text>a 2,3-bis-O-phytanyl-sn-glycerol 1-phospholipid + 8 A = a 2,3-bis-O-(geranylgeranyl)-sn-glycerol 1-phospholipid + 8 AH2</text>
        <dbReference type="Rhea" id="RHEA:64376"/>
        <dbReference type="ChEBI" id="CHEBI:13193"/>
        <dbReference type="ChEBI" id="CHEBI:17499"/>
        <dbReference type="ChEBI" id="CHEBI:138139"/>
        <dbReference type="ChEBI" id="CHEBI:138140"/>
    </reaction>
    <physiologicalReaction direction="right-to-left" evidence="1">
        <dbReference type="Rhea" id="RHEA:64378"/>
    </physiologicalReaction>
</comment>
<comment type="catalytic activity">
    <reaction evidence="1">
        <text>2,3-bis-O-(phytanyl)-sn-glycerol 1-phosphate + 8 A = 2,3-bis-O-(geranylgeranyl)-sn-glycerol 1-phosphate + 8 AH2</text>
        <dbReference type="Rhea" id="RHEA:64368"/>
        <dbReference type="ChEBI" id="CHEBI:13193"/>
        <dbReference type="ChEBI" id="CHEBI:17499"/>
        <dbReference type="ChEBI" id="CHEBI:58837"/>
        <dbReference type="ChEBI" id="CHEBI:73125"/>
    </reaction>
    <physiologicalReaction direction="right-to-left" evidence="1">
        <dbReference type="Rhea" id="RHEA:64370"/>
    </physiologicalReaction>
</comment>
<comment type="catalytic activity">
    <reaction evidence="1">
        <text>CDP-2,3-bis-O-(geranylgeranyl)-sn-glycerol + 8 AH2 = CDP-2,3-bis-O-(phytanyl)-sn-glycerol + 8 A</text>
        <dbReference type="Rhea" id="RHEA:84207"/>
        <dbReference type="ChEBI" id="CHEBI:13193"/>
        <dbReference type="ChEBI" id="CHEBI:17499"/>
        <dbReference type="ChEBI" id="CHEBI:58838"/>
        <dbReference type="ChEBI" id="CHEBI:74004"/>
    </reaction>
    <physiologicalReaction direction="left-to-right" evidence="1">
        <dbReference type="Rhea" id="RHEA:84208"/>
    </physiologicalReaction>
</comment>
<comment type="catalytic activity">
    <reaction evidence="1">
        <text>archaetidylserine + 8 AH2 = 2,3-bis-O-phytanyl-sn-glycero-3-phospho-L-serine + 8 A</text>
        <dbReference type="Rhea" id="RHEA:84215"/>
        <dbReference type="ChEBI" id="CHEBI:13193"/>
        <dbReference type="ChEBI" id="CHEBI:17499"/>
        <dbReference type="ChEBI" id="CHEBI:71517"/>
        <dbReference type="ChEBI" id="CHEBI:74853"/>
    </reaction>
    <physiologicalReaction direction="left-to-right" evidence="1">
        <dbReference type="Rhea" id="RHEA:84216"/>
    </physiologicalReaction>
</comment>
<comment type="cofactor">
    <cofactor evidence="1">
        <name>FAD</name>
        <dbReference type="ChEBI" id="CHEBI:57692"/>
    </cofactor>
    <text evidence="1">Binds 1 FAD per subunit.</text>
</comment>
<comment type="pathway">
    <text evidence="1">Membrane lipid metabolism; glycerophospholipid metabolism.</text>
</comment>
<comment type="miscellaneous">
    <text evidence="1">Reduction reaction proceeds via syn addition of hydrogen for double bonds.</text>
</comment>
<comment type="similarity">
    <text evidence="1">Belongs to the geranylgeranyl reductase family. DGGGPL reductase subfamily.</text>
</comment>
<keyword id="KW-0274">FAD</keyword>
<keyword id="KW-0285">Flavoprotein</keyword>
<keyword id="KW-0444">Lipid biosynthesis</keyword>
<keyword id="KW-0443">Lipid metabolism</keyword>
<keyword id="KW-0560">Oxidoreductase</keyword>
<keyword id="KW-0594">Phospholipid biosynthesis</keyword>
<keyword id="KW-1208">Phospholipid metabolism</keyword>
<organism>
    <name type="scientific">Methanococcus vannielii (strain ATCC 35089 / DSM 1224 / JCM 13029 / OCM 148 / SB)</name>
    <dbReference type="NCBI Taxonomy" id="406327"/>
    <lineage>
        <taxon>Archaea</taxon>
        <taxon>Methanobacteriati</taxon>
        <taxon>Methanobacteriota</taxon>
        <taxon>Methanomada group</taxon>
        <taxon>Methanococci</taxon>
        <taxon>Methanococcales</taxon>
        <taxon>Methanococcaceae</taxon>
        <taxon>Methanococcus</taxon>
    </lineage>
</organism>
<feature type="chain" id="PRO_0000351473" description="Digeranylgeranylglycerophospholipid reductase">
    <location>
        <begin position="1"/>
        <end position="390"/>
    </location>
</feature>
<feature type="binding site" evidence="1">
    <location>
        <position position="18"/>
    </location>
    <ligand>
        <name>FAD</name>
        <dbReference type="ChEBI" id="CHEBI:57692"/>
    </ligand>
</feature>
<feature type="binding site" evidence="1">
    <location>
        <position position="37"/>
    </location>
    <ligand>
        <name>FAD</name>
        <dbReference type="ChEBI" id="CHEBI:57692"/>
    </ligand>
</feature>
<feature type="binding site" evidence="1">
    <location>
        <position position="48"/>
    </location>
    <ligand>
        <name>FAD</name>
        <dbReference type="ChEBI" id="CHEBI:57692"/>
    </ligand>
</feature>
<feature type="binding site" evidence="1">
    <location>
        <position position="49"/>
    </location>
    <ligand>
        <name>FAD</name>
        <dbReference type="ChEBI" id="CHEBI:57692"/>
    </ligand>
</feature>
<feature type="binding site" evidence="1">
    <location>
        <position position="51"/>
    </location>
    <ligand>
        <name>FAD</name>
        <dbReference type="ChEBI" id="CHEBI:57692"/>
    </ligand>
</feature>
<feature type="binding site" evidence="1">
    <location>
        <position position="98"/>
    </location>
    <ligand>
        <name>FAD</name>
        <dbReference type="ChEBI" id="CHEBI:57692"/>
    </ligand>
</feature>
<feature type="binding site" evidence="1">
    <location>
        <position position="122"/>
    </location>
    <ligand>
        <name>FAD</name>
        <dbReference type="ChEBI" id="CHEBI:57692"/>
    </ligand>
</feature>
<feature type="binding site" evidence="1">
    <location>
        <position position="278"/>
    </location>
    <ligand>
        <name>FAD</name>
        <dbReference type="ChEBI" id="CHEBI:57692"/>
    </ligand>
</feature>
<feature type="binding site" evidence="1">
    <location>
        <position position="290"/>
    </location>
    <ligand>
        <name>FAD</name>
        <dbReference type="ChEBI" id="CHEBI:57692"/>
    </ligand>
</feature>
<feature type="binding site" evidence="1">
    <location>
        <position position="291"/>
    </location>
    <ligand>
        <name>FAD</name>
        <dbReference type="ChEBI" id="CHEBI:57692"/>
    </ligand>
</feature>
<feature type="binding site" evidence="1">
    <location>
        <position position="368"/>
    </location>
    <ligand>
        <name>a 2,3-bis-O-(geranylgeranyl)-sn-glycerol 1-phospholipid</name>
        <dbReference type="ChEBI" id="CHEBI:138140"/>
    </ligand>
</feature>